<proteinExistence type="inferred from homology"/>
<organism>
    <name type="scientific">Escherichia coli O45:K1 (strain S88 / ExPEC)</name>
    <dbReference type="NCBI Taxonomy" id="585035"/>
    <lineage>
        <taxon>Bacteria</taxon>
        <taxon>Pseudomonadati</taxon>
        <taxon>Pseudomonadota</taxon>
        <taxon>Gammaproteobacteria</taxon>
        <taxon>Enterobacterales</taxon>
        <taxon>Enterobacteriaceae</taxon>
        <taxon>Escherichia</taxon>
    </lineage>
</organism>
<protein>
    <recommendedName>
        <fullName evidence="1">Large ribosomal subunit protein bL34</fullName>
    </recommendedName>
    <alternativeName>
        <fullName evidence="2">50S ribosomal protein L34</fullName>
    </alternativeName>
</protein>
<comment type="similarity">
    <text evidence="1">Belongs to the bacterial ribosomal protein bL34 family.</text>
</comment>
<feature type="chain" id="PRO_1000196047" description="Large ribosomal subunit protein bL34">
    <location>
        <begin position="1"/>
        <end position="46"/>
    </location>
</feature>
<dbReference type="EMBL" id="CU928161">
    <property type="protein sequence ID" value="CAR05332.1"/>
    <property type="molecule type" value="Genomic_DNA"/>
</dbReference>
<dbReference type="RefSeq" id="WP_000831330.1">
    <property type="nucleotide sequence ID" value="NC_011742.1"/>
</dbReference>
<dbReference type="EMDB" id="EMD-0661"/>
<dbReference type="EMDB" id="EMD-0662"/>
<dbReference type="EMDB" id="EMD-20056"/>
<dbReference type="EMDB" id="EMD-20057"/>
<dbReference type="EMDB" id="EMD-20058"/>
<dbReference type="EMDB" id="EMD-20121"/>
<dbReference type="EMDB" id="EMD-20173"/>
<dbReference type="EMDB" id="EMD-20174"/>
<dbReference type="EMDB" id="EMD-20184"/>
<dbReference type="EMDB" id="EMD-20187"/>
<dbReference type="EMDB" id="EMD-20188"/>
<dbReference type="EMDB" id="EMD-20193"/>
<dbReference type="EMDB" id="EMD-20204"/>
<dbReference type="EMDB" id="EMD-20353"/>
<dbReference type="EMDB" id="EMD-20638"/>
<dbReference type="EMDB" id="EMD-21386"/>
<dbReference type="EMDB" id="EMD-21468"/>
<dbReference type="EMDB" id="EMD-21469"/>
<dbReference type="EMDB" id="EMD-21470"/>
<dbReference type="EMDB" id="EMD-21471"/>
<dbReference type="EMDB" id="EMD-21472"/>
<dbReference type="EMDB" id="EMD-21474"/>
<dbReference type="EMDB" id="EMD-21475"/>
<dbReference type="EMDB" id="EMD-21476"/>
<dbReference type="EMDB" id="EMD-21477"/>
<dbReference type="EMDB" id="EMD-21482"/>
<dbReference type="EMDB" id="EMD-21483"/>
<dbReference type="EMDB" id="EMD-21485"/>
<dbReference type="EMDB" id="EMD-21486"/>
<dbReference type="EMDB" id="EMD-21494"/>
<dbReference type="EMDB" id="EMD-21619"/>
<dbReference type="EMDB" id="EMD-21620"/>
<dbReference type="EMDB" id="EMD-21621"/>
<dbReference type="EMDB" id="EMD-21622"/>
<dbReference type="EMDB" id="EMD-21623"/>
<dbReference type="EMDB" id="EMD-21624"/>
<dbReference type="EMDB" id="EMD-21626"/>
<dbReference type="EMDB" id="EMD-21627"/>
<dbReference type="EMDB" id="EMD-21628"/>
<dbReference type="EMDB" id="EMD-21629"/>
<dbReference type="EMDB" id="EMD-22082"/>
<dbReference type="EMDB" id="EMD-22084"/>
<dbReference type="EMDB" id="EMD-22087"/>
<dbReference type="EMDB" id="EMD-22107"/>
<dbReference type="EMDB" id="EMD-22141"/>
<dbReference type="EMDB" id="EMD-22142"/>
<dbReference type="EMDB" id="EMD-22181"/>
<dbReference type="EMDB" id="EMD-22192"/>
<dbReference type="EMDB" id="EMD-22193"/>
<dbReference type="EMDB" id="EMD-22586"/>
<dbReference type="EMDB" id="EMD-23539"/>
<dbReference type="EMDB" id="EMD-23673"/>
<dbReference type="EMDB" id="EMD-24800"/>
<dbReference type="EMDB" id="EMD-24801"/>
<dbReference type="EMDB" id="EMD-24802"/>
<dbReference type="EMDB" id="EMD-24804"/>
<dbReference type="EMDB" id="EMD-24944"/>
<dbReference type="EMDB" id="EMD-26037"/>
<dbReference type="EMDB" id="EMD-26486"/>
<dbReference type="EMDB" id="EMD-26666"/>
<dbReference type="EMDB" id="EMD-27852"/>
<dbReference type="EMDB" id="EMD-27854"/>
<dbReference type="EMDB" id="EMD-27855"/>
<dbReference type="EMDB" id="EMD-27857"/>
<dbReference type="EMDB" id="EMD-27858"/>
<dbReference type="EMDB" id="EMD-27867"/>
<dbReference type="EMDB" id="EMD-27868"/>
<dbReference type="EMDB" id="EMD-27869"/>
<dbReference type="EMDB" id="EMD-27876"/>
<dbReference type="EMDB" id="EMD-27877"/>
<dbReference type="EMDB" id="EMD-27878"/>
<dbReference type="EMDB" id="EMD-27879"/>
<dbReference type="EMDB" id="EMD-27880"/>
<dbReference type="EMDB" id="EMD-27881"/>
<dbReference type="EMDB" id="EMD-27882"/>
<dbReference type="EMDB" id="EMD-27883"/>
<dbReference type="EMDB" id="EMD-27884"/>
<dbReference type="EMDB" id="EMD-28165"/>
<dbReference type="EMDB" id="EMD-28197"/>
<dbReference type="EMDB" id="EMD-28254"/>
<dbReference type="EMDB" id="EMD-29214"/>
<dbReference type="EMDB" id="EMD-29449"/>
<dbReference type="EMDB" id="EMD-29620"/>
<dbReference type="EMDB" id="EMD-29621"/>
<dbReference type="EMDB" id="EMD-29624"/>
<dbReference type="EMDB" id="EMD-29627"/>
<dbReference type="EMDB" id="EMD-29628"/>
<dbReference type="EMDB" id="EMD-29631"/>
<dbReference type="EMDB" id="EMD-29634"/>
<dbReference type="EMDB" id="EMD-29681"/>
<dbReference type="EMDB" id="EMD-29687"/>
<dbReference type="EMDB" id="EMD-29688"/>
<dbReference type="EMDB" id="EMD-29689"/>
<dbReference type="EMDB" id="EMD-29786"/>
<dbReference type="EMDB" id="EMD-29787"/>
<dbReference type="EMDB" id="EMD-29788"/>
<dbReference type="EMDB" id="EMD-29819"/>
<dbReference type="EMDB" id="EMD-29820"/>
<dbReference type="EMDB" id="EMD-29821"/>
<dbReference type="EMDB" id="EMD-29822"/>
<dbReference type="EMDB" id="EMD-40882"/>
<dbReference type="EMDB" id="EMD-41049"/>
<dbReference type="EMDB" id="EMD-41050"/>
<dbReference type="EMDB" id="EMD-42453"/>
<dbReference type="EMDB" id="EMD-42454"/>
<dbReference type="EMDB" id="EMD-42473"/>
<dbReference type="EMDB" id="EMD-42474"/>
<dbReference type="EMDB" id="EMD-42477"/>
<dbReference type="EMDB" id="EMD-42479"/>
<dbReference type="EMDB" id="EMD-42492"/>
<dbReference type="EMDB" id="EMD-42493"/>
<dbReference type="EMDB" id="EMD-42503"/>
<dbReference type="EMDB" id="EMD-42504"/>
<dbReference type="EMDB" id="EMD-43490"/>
<dbReference type="EMDB" id="EMD-43491"/>
<dbReference type="EMDB" id="EMD-43929"/>
<dbReference type="EMDB" id="EMD-43930"/>
<dbReference type="EMDB" id="EMD-45569"/>
<dbReference type="EMDB" id="EMD-45572"/>
<dbReference type="EMDB" id="EMD-45573"/>
<dbReference type="EMDB" id="EMD-46632"/>
<dbReference type="EMDB" id="EMD-48479"/>
<dbReference type="EMDB" id="EMD-48513"/>
<dbReference type="EMDB" id="EMD-7970"/>
<dbReference type="EMDB" id="EMD-8521"/>
<dbReference type="EMDB" id="EMD-8522"/>
<dbReference type="EMDB" id="EMD-8826"/>
<dbReference type="EMDB" id="EMD-8829"/>
<dbReference type="SMR" id="B7MGC4"/>
<dbReference type="IntAct" id="B7MGC4">
    <property type="interactions" value="2"/>
</dbReference>
<dbReference type="GeneID" id="98190980"/>
<dbReference type="KEGG" id="ecz:ECS88_4126"/>
<dbReference type="HOGENOM" id="CLU_129938_2_1_6"/>
<dbReference type="Proteomes" id="UP000000747">
    <property type="component" value="Chromosome"/>
</dbReference>
<dbReference type="GO" id="GO:1990904">
    <property type="term" value="C:ribonucleoprotein complex"/>
    <property type="evidence" value="ECO:0007669"/>
    <property type="project" value="UniProtKB-KW"/>
</dbReference>
<dbReference type="GO" id="GO:0005840">
    <property type="term" value="C:ribosome"/>
    <property type="evidence" value="ECO:0007669"/>
    <property type="project" value="UniProtKB-KW"/>
</dbReference>
<dbReference type="GO" id="GO:0003735">
    <property type="term" value="F:structural constituent of ribosome"/>
    <property type="evidence" value="ECO:0007669"/>
    <property type="project" value="InterPro"/>
</dbReference>
<dbReference type="GO" id="GO:0006412">
    <property type="term" value="P:translation"/>
    <property type="evidence" value="ECO:0007669"/>
    <property type="project" value="UniProtKB-UniRule"/>
</dbReference>
<dbReference type="FunFam" id="1.10.287.3980:FF:000001">
    <property type="entry name" value="Mitochondrial ribosomal protein L34"/>
    <property type="match status" value="1"/>
</dbReference>
<dbReference type="Gene3D" id="1.10.287.3980">
    <property type="match status" value="1"/>
</dbReference>
<dbReference type="HAMAP" id="MF_00391">
    <property type="entry name" value="Ribosomal_bL34"/>
    <property type="match status" value="1"/>
</dbReference>
<dbReference type="InterPro" id="IPR000271">
    <property type="entry name" value="Ribosomal_bL34"/>
</dbReference>
<dbReference type="InterPro" id="IPR020939">
    <property type="entry name" value="Ribosomal_bL34_CS"/>
</dbReference>
<dbReference type="NCBIfam" id="TIGR01030">
    <property type="entry name" value="rpmH_bact"/>
    <property type="match status" value="1"/>
</dbReference>
<dbReference type="PANTHER" id="PTHR14503:SF4">
    <property type="entry name" value="LARGE RIBOSOMAL SUBUNIT PROTEIN BL34M"/>
    <property type="match status" value="1"/>
</dbReference>
<dbReference type="PANTHER" id="PTHR14503">
    <property type="entry name" value="MITOCHONDRIAL RIBOSOMAL PROTEIN 34 FAMILY MEMBER"/>
    <property type="match status" value="1"/>
</dbReference>
<dbReference type="Pfam" id="PF00468">
    <property type="entry name" value="Ribosomal_L34"/>
    <property type="match status" value="1"/>
</dbReference>
<dbReference type="PROSITE" id="PS00784">
    <property type="entry name" value="RIBOSOMAL_L34"/>
    <property type="match status" value="1"/>
</dbReference>
<name>RL34_ECO45</name>
<gene>
    <name evidence="1" type="primary">rpmH</name>
    <name type="ordered locus">ECS88_4126</name>
</gene>
<accession>B7MGC4</accession>
<reference key="1">
    <citation type="journal article" date="2009" name="PLoS Genet.">
        <title>Organised genome dynamics in the Escherichia coli species results in highly diverse adaptive paths.</title>
        <authorList>
            <person name="Touchon M."/>
            <person name="Hoede C."/>
            <person name="Tenaillon O."/>
            <person name="Barbe V."/>
            <person name="Baeriswyl S."/>
            <person name="Bidet P."/>
            <person name="Bingen E."/>
            <person name="Bonacorsi S."/>
            <person name="Bouchier C."/>
            <person name="Bouvet O."/>
            <person name="Calteau A."/>
            <person name="Chiapello H."/>
            <person name="Clermont O."/>
            <person name="Cruveiller S."/>
            <person name="Danchin A."/>
            <person name="Diard M."/>
            <person name="Dossat C."/>
            <person name="Karoui M.E."/>
            <person name="Frapy E."/>
            <person name="Garry L."/>
            <person name="Ghigo J.M."/>
            <person name="Gilles A.M."/>
            <person name="Johnson J."/>
            <person name="Le Bouguenec C."/>
            <person name="Lescat M."/>
            <person name="Mangenot S."/>
            <person name="Martinez-Jehanne V."/>
            <person name="Matic I."/>
            <person name="Nassif X."/>
            <person name="Oztas S."/>
            <person name="Petit M.A."/>
            <person name="Pichon C."/>
            <person name="Rouy Z."/>
            <person name="Ruf C.S."/>
            <person name="Schneider D."/>
            <person name="Tourret J."/>
            <person name="Vacherie B."/>
            <person name="Vallenet D."/>
            <person name="Medigue C."/>
            <person name="Rocha E.P.C."/>
            <person name="Denamur E."/>
        </authorList>
    </citation>
    <scope>NUCLEOTIDE SEQUENCE [LARGE SCALE GENOMIC DNA]</scope>
    <source>
        <strain>S88 / ExPEC</strain>
    </source>
</reference>
<sequence length="46" mass="5380">MKRTFQPSVLKRNRSHGFRARMATKNGRQVLARRRAKGRARLTVSK</sequence>
<evidence type="ECO:0000255" key="1">
    <source>
        <dbReference type="HAMAP-Rule" id="MF_00391"/>
    </source>
</evidence>
<evidence type="ECO:0000305" key="2"/>
<keyword id="KW-1185">Reference proteome</keyword>
<keyword id="KW-0687">Ribonucleoprotein</keyword>
<keyword id="KW-0689">Ribosomal protein</keyword>